<evidence type="ECO:0000250" key="1"/>
<evidence type="ECO:0000255" key="2">
    <source>
        <dbReference type="PROSITE-ProRule" id="PRU10013"/>
    </source>
</evidence>
<evidence type="ECO:0000256" key="3">
    <source>
        <dbReference type="SAM" id="MobiDB-lite"/>
    </source>
</evidence>
<evidence type="ECO:0000305" key="4"/>
<comment type="function">
    <text evidence="1">Decomposes hydrogen peroxide into water and oxygen; serves to protect cells from the toxic effects of hydrogen peroxide.</text>
</comment>
<comment type="catalytic activity">
    <reaction evidence="2">
        <text>2 H2O2 = O2 + 2 H2O</text>
        <dbReference type="Rhea" id="RHEA:20309"/>
        <dbReference type="ChEBI" id="CHEBI:15377"/>
        <dbReference type="ChEBI" id="CHEBI:15379"/>
        <dbReference type="ChEBI" id="CHEBI:16240"/>
        <dbReference type="EC" id="1.11.1.6"/>
    </reaction>
</comment>
<comment type="cofactor">
    <cofactor evidence="1">
        <name>heme</name>
        <dbReference type="ChEBI" id="CHEBI:30413"/>
    </cofactor>
</comment>
<comment type="subunit">
    <text evidence="1">Homodimer.</text>
</comment>
<comment type="similarity">
    <text evidence="4">Belongs to the catalase family.</text>
</comment>
<comment type="sequence caution" evidence="4">
    <conflict type="erroneous initiation">
        <sequence resource="EMBL-CDS" id="BAB42427"/>
    </conflict>
</comment>
<sequence>MSQQDKKLTGVFGHPVSDRENSMTAGPRGPLLMQDIYFLEQMSQFDREVIPERRMHAKGSGAFGTFTVTKDITKYTNAKIFSEIGKQTEMFARFSTVAGERGAADAERDIRGFALKFYTEEGNWDLVGNNTPVFFFRDPKLFVSLNRAVKRDPRTNMRDAQNNWDFWTGLPEALHQVTILMSDRGIPKDLRHMHGFGSHTYSMYNDSGERVWVKFHFRTQQGIENLTDEEAAEIIATDRDSSQRDLFEAIEKGDYPKWTMYIQVMTEEQAKNHKDNPFDLTKVWYHDEYPLIEVGEFELNRNPDNYFMDVEQAAFAPTNIIPGLDFSPDKMLQGRLFSYGDAQRYRLGVNHWQIPVNQPKGVGIENICPFSRDGQMRVVDNNQGGGTHYYPNNHGKFDSQPEYKKPPFPTDGYGYEYNQRQDDDNYFEQPGKLFRLQSEDAKERIFTNTANAMEGVTDDVKRRHIRHCYKADPEYGKGVAKALGIDINSIDLETENDETYENFEK</sequence>
<protein>
    <recommendedName>
        <fullName>Catalase</fullName>
        <ecNumber>1.11.1.6</ecNumber>
    </recommendedName>
</protein>
<gene>
    <name type="primary">katA</name>
    <name type="ordered locus">SA1170</name>
</gene>
<reference key="1">
    <citation type="journal article" date="2001" name="Lancet">
        <title>Whole genome sequencing of meticillin-resistant Staphylococcus aureus.</title>
        <authorList>
            <person name="Kuroda M."/>
            <person name="Ohta T."/>
            <person name="Uchiyama I."/>
            <person name="Baba T."/>
            <person name="Yuzawa H."/>
            <person name="Kobayashi I."/>
            <person name="Cui L."/>
            <person name="Oguchi A."/>
            <person name="Aoki K."/>
            <person name="Nagai Y."/>
            <person name="Lian J.-Q."/>
            <person name="Ito T."/>
            <person name="Kanamori M."/>
            <person name="Matsumaru H."/>
            <person name="Maruyama A."/>
            <person name="Murakami H."/>
            <person name="Hosoyama A."/>
            <person name="Mizutani-Ui Y."/>
            <person name="Takahashi N.K."/>
            <person name="Sawano T."/>
            <person name="Inoue R."/>
            <person name="Kaito C."/>
            <person name="Sekimizu K."/>
            <person name="Hirakawa H."/>
            <person name="Kuhara S."/>
            <person name="Goto S."/>
            <person name="Yabuzaki J."/>
            <person name="Kanehisa M."/>
            <person name="Yamashita A."/>
            <person name="Oshima K."/>
            <person name="Furuya K."/>
            <person name="Yoshino C."/>
            <person name="Shiba T."/>
            <person name="Hattori M."/>
            <person name="Ogasawara N."/>
            <person name="Hayashi H."/>
            <person name="Hiramatsu K."/>
        </authorList>
    </citation>
    <scope>NUCLEOTIDE SEQUENCE [LARGE SCALE GENOMIC DNA]</scope>
    <source>
        <strain>N315</strain>
    </source>
</reference>
<reference key="2">
    <citation type="journal article" date="2005" name="J. Microbiol. Methods">
        <title>Correlation of proteomic and transcriptomic profiles of Staphylococcus aureus during the post-exponential phase of growth.</title>
        <authorList>
            <person name="Scherl A."/>
            <person name="Francois P."/>
            <person name="Bento M."/>
            <person name="Deshusses J.M."/>
            <person name="Charbonnier Y."/>
            <person name="Converset V."/>
            <person name="Huyghe A."/>
            <person name="Walter N."/>
            <person name="Hoogland C."/>
            <person name="Appel R.D."/>
            <person name="Sanchez J.-C."/>
            <person name="Zimmermann-Ivol C.G."/>
            <person name="Corthals G.L."/>
            <person name="Hochstrasser D.F."/>
            <person name="Schrenzel J."/>
        </authorList>
    </citation>
    <scope>IDENTIFICATION BY MASS SPECTROMETRY</scope>
    <source>
        <strain>N315</strain>
    </source>
</reference>
<reference key="3">
    <citation type="submission" date="2007-10" db="UniProtKB">
        <title>Shotgun proteomic analysis of total and membrane protein extracts of S. aureus strain N315.</title>
        <authorList>
            <person name="Vaezzadeh A.R."/>
            <person name="Deshusses J."/>
            <person name="Lescuyer P."/>
            <person name="Hochstrasser D.F."/>
        </authorList>
    </citation>
    <scope>IDENTIFICATION BY MASS SPECTROMETRY [LARGE SCALE ANALYSIS]</scope>
    <source>
        <strain>N315</strain>
    </source>
</reference>
<dbReference type="EC" id="1.11.1.6"/>
<dbReference type="EMBL" id="BA000018">
    <property type="protein sequence ID" value="BAB42427.1"/>
    <property type="status" value="ALT_INIT"/>
    <property type="molecule type" value="Genomic_DNA"/>
</dbReference>
<dbReference type="PIR" id="G89908">
    <property type="entry name" value="G89908"/>
</dbReference>
<dbReference type="RefSeq" id="WP_000082539.1">
    <property type="nucleotide sequence ID" value="NC_002745.2"/>
</dbReference>
<dbReference type="SMR" id="Q7A5T2"/>
<dbReference type="EnsemblBacteria" id="BAB42427">
    <property type="protein sequence ID" value="BAB42427"/>
    <property type="gene ID" value="BAB42427"/>
</dbReference>
<dbReference type="KEGG" id="sau:SA1170"/>
<dbReference type="HOGENOM" id="CLU_010645_2_0_9"/>
<dbReference type="GO" id="GO:0005737">
    <property type="term" value="C:cytoplasm"/>
    <property type="evidence" value="ECO:0007669"/>
    <property type="project" value="TreeGrafter"/>
</dbReference>
<dbReference type="GO" id="GO:0004096">
    <property type="term" value="F:catalase activity"/>
    <property type="evidence" value="ECO:0007669"/>
    <property type="project" value="UniProtKB-EC"/>
</dbReference>
<dbReference type="GO" id="GO:0020037">
    <property type="term" value="F:heme binding"/>
    <property type="evidence" value="ECO:0007669"/>
    <property type="project" value="InterPro"/>
</dbReference>
<dbReference type="GO" id="GO:0046872">
    <property type="term" value="F:metal ion binding"/>
    <property type="evidence" value="ECO:0007669"/>
    <property type="project" value="UniProtKB-KW"/>
</dbReference>
<dbReference type="GO" id="GO:0042744">
    <property type="term" value="P:hydrogen peroxide catabolic process"/>
    <property type="evidence" value="ECO:0007669"/>
    <property type="project" value="UniProtKB-KW"/>
</dbReference>
<dbReference type="GO" id="GO:0042542">
    <property type="term" value="P:response to hydrogen peroxide"/>
    <property type="evidence" value="ECO:0007669"/>
    <property type="project" value="TreeGrafter"/>
</dbReference>
<dbReference type="CDD" id="cd08156">
    <property type="entry name" value="catalase_clade_3"/>
    <property type="match status" value="1"/>
</dbReference>
<dbReference type="FunFam" id="2.40.180.10:FF:000001">
    <property type="entry name" value="Catalase"/>
    <property type="match status" value="1"/>
</dbReference>
<dbReference type="Gene3D" id="2.40.180.10">
    <property type="entry name" value="Catalase core domain"/>
    <property type="match status" value="1"/>
</dbReference>
<dbReference type="InterPro" id="IPR018028">
    <property type="entry name" value="Catalase"/>
</dbReference>
<dbReference type="InterPro" id="IPR040333">
    <property type="entry name" value="Catalase_3"/>
</dbReference>
<dbReference type="InterPro" id="IPR024708">
    <property type="entry name" value="Catalase_AS"/>
</dbReference>
<dbReference type="InterPro" id="IPR024711">
    <property type="entry name" value="Catalase_clade1/3"/>
</dbReference>
<dbReference type="InterPro" id="IPR011614">
    <property type="entry name" value="Catalase_core"/>
</dbReference>
<dbReference type="InterPro" id="IPR002226">
    <property type="entry name" value="Catalase_haem_BS"/>
</dbReference>
<dbReference type="InterPro" id="IPR010582">
    <property type="entry name" value="Catalase_immune_responsive"/>
</dbReference>
<dbReference type="InterPro" id="IPR020835">
    <property type="entry name" value="Catalase_sf"/>
</dbReference>
<dbReference type="PANTHER" id="PTHR11465">
    <property type="entry name" value="CATALASE"/>
    <property type="match status" value="1"/>
</dbReference>
<dbReference type="PANTHER" id="PTHR11465:SF61">
    <property type="entry name" value="CATALASE"/>
    <property type="match status" value="1"/>
</dbReference>
<dbReference type="Pfam" id="PF00199">
    <property type="entry name" value="Catalase"/>
    <property type="match status" value="1"/>
</dbReference>
<dbReference type="Pfam" id="PF06628">
    <property type="entry name" value="Catalase-rel"/>
    <property type="match status" value="1"/>
</dbReference>
<dbReference type="PIRSF" id="PIRSF038928">
    <property type="entry name" value="Catalase_clade1-3"/>
    <property type="match status" value="1"/>
</dbReference>
<dbReference type="PRINTS" id="PR00067">
    <property type="entry name" value="CATALASE"/>
</dbReference>
<dbReference type="SMART" id="SM01060">
    <property type="entry name" value="Catalase"/>
    <property type="match status" value="1"/>
</dbReference>
<dbReference type="SUPFAM" id="SSF56634">
    <property type="entry name" value="Heme-dependent catalase-like"/>
    <property type="match status" value="1"/>
</dbReference>
<dbReference type="PROSITE" id="PS00437">
    <property type="entry name" value="CATALASE_1"/>
    <property type="match status" value="1"/>
</dbReference>
<dbReference type="PROSITE" id="PS00438">
    <property type="entry name" value="CATALASE_2"/>
    <property type="match status" value="1"/>
</dbReference>
<dbReference type="PROSITE" id="PS51402">
    <property type="entry name" value="CATALASE_3"/>
    <property type="match status" value="1"/>
</dbReference>
<accession>Q7A5T2</accession>
<keyword id="KW-0349">Heme</keyword>
<keyword id="KW-0376">Hydrogen peroxide</keyword>
<keyword id="KW-0408">Iron</keyword>
<keyword id="KW-0479">Metal-binding</keyword>
<keyword id="KW-0560">Oxidoreductase</keyword>
<keyword id="KW-0575">Peroxidase</keyword>
<proteinExistence type="evidence at protein level"/>
<feature type="chain" id="PRO_0000084999" description="Catalase">
    <location>
        <begin position="1"/>
        <end position="505"/>
    </location>
</feature>
<feature type="region of interest" description="Disordered" evidence="3">
    <location>
        <begin position="1"/>
        <end position="25"/>
    </location>
</feature>
<feature type="active site" evidence="2">
    <location>
        <position position="56"/>
    </location>
</feature>
<feature type="active site" evidence="2">
    <location>
        <position position="129"/>
    </location>
</feature>
<feature type="binding site" description="axial binding residue" evidence="1">
    <location>
        <position position="339"/>
    </location>
    <ligand>
        <name>heme</name>
        <dbReference type="ChEBI" id="CHEBI:30413"/>
    </ligand>
    <ligandPart>
        <name>Fe</name>
        <dbReference type="ChEBI" id="CHEBI:18248"/>
    </ligandPart>
</feature>
<name>CATA_STAAN</name>
<organism>
    <name type="scientific">Staphylococcus aureus (strain N315)</name>
    <dbReference type="NCBI Taxonomy" id="158879"/>
    <lineage>
        <taxon>Bacteria</taxon>
        <taxon>Bacillati</taxon>
        <taxon>Bacillota</taxon>
        <taxon>Bacilli</taxon>
        <taxon>Bacillales</taxon>
        <taxon>Staphylococcaceae</taxon>
        <taxon>Staphylococcus</taxon>
    </lineage>
</organism>